<reference key="1">
    <citation type="journal article" date="2005" name="Nucleic Acids Res.">
        <title>The genome sequence of Salmonella enterica serovar Choleraesuis, a highly invasive and resistant zoonotic pathogen.</title>
        <authorList>
            <person name="Chiu C.-H."/>
            <person name="Tang P."/>
            <person name="Chu C."/>
            <person name="Hu S."/>
            <person name="Bao Q."/>
            <person name="Yu J."/>
            <person name="Chou Y.-Y."/>
            <person name="Wang H.-S."/>
            <person name="Lee Y.-S."/>
        </authorList>
    </citation>
    <scope>NUCLEOTIDE SEQUENCE [LARGE SCALE GENOMIC DNA]</scope>
    <source>
        <strain>SC-B67</strain>
    </source>
</reference>
<protein>
    <recommendedName>
        <fullName evidence="1">DNA gyrase inhibitor YacG</fullName>
    </recommendedName>
</protein>
<name>YACG_SALCH</name>
<evidence type="ECO:0000255" key="1">
    <source>
        <dbReference type="HAMAP-Rule" id="MF_00649"/>
    </source>
</evidence>
<feature type="chain" id="PRO_1000056987" description="DNA gyrase inhibitor YacG">
    <location>
        <begin position="1"/>
        <end position="63"/>
    </location>
</feature>
<feature type="binding site" evidence="1">
    <location>
        <position position="9"/>
    </location>
    <ligand>
        <name>Zn(2+)</name>
        <dbReference type="ChEBI" id="CHEBI:29105"/>
    </ligand>
</feature>
<feature type="binding site" evidence="1">
    <location>
        <position position="12"/>
    </location>
    <ligand>
        <name>Zn(2+)</name>
        <dbReference type="ChEBI" id="CHEBI:29105"/>
    </ligand>
</feature>
<feature type="binding site" evidence="1">
    <location>
        <position position="28"/>
    </location>
    <ligand>
        <name>Zn(2+)</name>
        <dbReference type="ChEBI" id="CHEBI:29105"/>
    </ligand>
</feature>
<feature type="binding site" evidence="1">
    <location>
        <position position="32"/>
    </location>
    <ligand>
        <name>Zn(2+)</name>
        <dbReference type="ChEBI" id="CHEBI:29105"/>
    </ligand>
</feature>
<proteinExistence type="inferred from homology"/>
<keyword id="KW-0479">Metal-binding</keyword>
<keyword id="KW-0862">Zinc</keyword>
<comment type="function">
    <text evidence="1">Inhibits all the catalytic activities of DNA gyrase by preventing its interaction with DNA. Acts by binding directly to the C-terminal domain of GyrB, which probably disrupts DNA binding by the gyrase.</text>
</comment>
<comment type="cofactor">
    <cofactor evidence="1">
        <name>Zn(2+)</name>
        <dbReference type="ChEBI" id="CHEBI:29105"/>
    </cofactor>
    <text evidence="1">Binds 1 zinc ion.</text>
</comment>
<comment type="subunit">
    <text evidence="1">Interacts with GyrB.</text>
</comment>
<comment type="similarity">
    <text evidence="1">Belongs to the DNA gyrase inhibitor YacG family.</text>
</comment>
<accession>Q57TB8</accession>
<dbReference type="EMBL" id="AE017220">
    <property type="protein sequence ID" value="AAX64043.1"/>
    <property type="molecule type" value="Genomic_DNA"/>
</dbReference>
<dbReference type="RefSeq" id="WP_001286419.1">
    <property type="nucleotide sequence ID" value="NC_006905.1"/>
</dbReference>
<dbReference type="SMR" id="Q57TB8"/>
<dbReference type="KEGG" id="sec:SCH_0137"/>
<dbReference type="HOGENOM" id="CLU_178280_3_1_6"/>
<dbReference type="Proteomes" id="UP000000538">
    <property type="component" value="Chromosome"/>
</dbReference>
<dbReference type="GO" id="GO:0008657">
    <property type="term" value="F:DNA topoisomerase type II (double strand cut, ATP-hydrolyzing) inhibitor activity"/>
    <property type="evidence" value="ECO:0007669"/>
    <property type="project" value="UniProtKB-UniRule"/>
</dbReference>
<dbReference type="GO" id="GO:0008270">
    <property type="term" value="F:zinc ion binding"/>
    <property type="evidence" value="ECO:0007669"/>
    <property type="project" value="UniProtKB-UniRule"/>
</dbReference>
<dbReference type="GO" id="GO:0006355">
    <property type="term" value="P:regulation of DNA-templated transcription"/>
    <property type="evidence" value="ECO:0007669"/>
    <property type="project" value="InterPro"/>
</dbReference>
<dbReference type="Gene3D" id="3.30.50.10">
    <property type="entry name" value="Erythroid Transcription Factor GATA-1, subunit A"/>
    <property type="match status" value="1"/>
</dbReference>
<dbReference type="HAMAP" id="MF_00649">
    <property type="entry name" value="DNA_gyrase_inhibitor_YacG"/>
    <property type="match status" value="1"/>
</dbReference>
<dbReference type="InterPro" id="IPR005584">
    <property type="entry name" value="DNA_gyrase_inhibitor_YacG"/>
</dbReference>
<dbReference type="InterPro" id="IPR013088">
    <property type="entry name" value="Znf_NHR/GATA"/>
</dbReference>
<dbReference type="NCBIfam" id="NF001638">
    <property type="entry name" value="PRK00418.1"/>
    <property type="match status" value="1"/>
</dbReference>
<dbReference type="PANTHER" id="PTHR36150">
    <property type="entry name" value="DNA GYRASE INHIBITOR YACG"/>
    <property type="match status" value="1"/>
</dbReference>
<dbReference type="PANTHER" id="PTHR36150:SF1">
    <property type="entry name" value="DNA GYRASE INHIBITOR YACG"/>
    <property type="match status" value="1"/>
</dbReference>
<dbReference type="Pfam" id="PF03884">
    <property type="entry name" value="YacG"/>
    <property type="match status" value="1"/>
</dbReference>
<dbReference type="SUPFAM" id="SSF57716">
    <property type="entry name" value="Glucocorticoid receptor-like (DNA-binding domain)"/>
    <property type="match status" value="1"/>
</dbReference>
<organism>
    <name type="scientific">Salmonella choleraesuis (strain SC-B67)</name>
    <dbReference type="NCBI Taxonomy" id="321314"/>
    <lineage>
        <taxon>Bacteria</taxon>
        <taxon>Pseudomonadati</taxon>
        <taxon>Pseudomonadota</taxon>
        <taxon>Gammaproteobacteria</taxon>
        <taxon>Enterobacterales</taxon>
        <taxon>Enterobacteriaceae</taxon>
        <taxon>Salmonella</taxon>
    </lineage>
</organism>
<gene>
    <name evidence="1" type="primary">yacG</name>
    <name type="ordered locus">SCH_0137</name>
</gene>
<sequence length="63" mass="7050">MSDVTVVNCPTCGKPVVWGEISPFRPFCSKRCQLIDLGEWAAEEKRIASSGDQSDSDDWSEER</sequence>